<accession>Q3E984</accession>
<comment type="function">
    <text evidence="1">Involved in RNA-mediated post-transcriptional gene silencing (PTGS). Main component of the RNA-induced silencing complex (RISC) that binds to a short guide RNA such as a microRNA (miRNA) or small interfering RNA (siRNA). RISC uses the mature miRNA or siRNA as a guide for slicer-directed cleavage of homologous mRNAs to repress gene expression (By similarity).</text>
</comment>
<comment type="similarity">
    <text evidence="5">Belongs to the argonaute family. Ago subfamily.</text>
</comment>
<protein>
    <recommendedName>
        <fullName>Protein argonaute 8</fullName>
    </recommendedName>
</protein>
<sequence length="850" mass="95507">MDTTLPPPQHMEREPLKSKSSLLPMTRRGNGSKGQKILLLTNHFRVNFRKPNSHNFFHYSVTITYEDGSPLLAKGFGRKILEKVQQTCQADLGCKHFAYDGDKNLYTVGPLPRSSLDFSVVLETAPSRRNADKRLKLPHQSKKFNVAILFAPPEIPMEAIANALQGKKTKHLLDAIRVMDCILSQNAARQGCLLVRQSFFHNDAKYFANIGEGVDCCKGFHSSFRTTQGGLSLNIDVSTAMIVKPGPVVDFLIANQGVNDPFSINWKKAKNTLKNLRVKVLPSNQEYKITGLSGLHCKDQTFTWKKRNQNREFEEVEITVSDYFTRIREIELRYSGGLPCINVGKPNRPTYFPIELCELVSLQRYTKALTKFQRSNLIKESRQNPQQRIGVLTRALKTSNYNDDPMLQECGVRIGSDFTQVEGRVLPTPKLKAGKEQDIYPINGSWNFKNKPATVTRWAVVNFSARCDPQKIIDDLTRCGKMKGINVDSPYHVVFEENPQFKDATGSVRVDKMFQHLQSILGEVPPKFLLCILEKKNSDVYEKSCSMWNCECIVPPQNLNDQYLTNLLLKINAKLGGLNSVLDMELSGTMPLVMRVPTIIIGMDVSHGSPGQSDHIPSIAAVVSSREWPLISKYRACVRTQSPKVEMIDSLFKPVSDKDDQGIMRELLLDFHSSSGKKPNHIIIFRDGVSESQFNQVLNIELDQMMQINHHTKFFQTESPNNVLPGTIIDSNICHQHNNDFYLCAHAGKIGTTRPTHYHVLYDEIGFDTDQLQELVHSLSYVYQRSTTAISLVAPICYAHLAAAQMATAMKFEDMSETSSSHGGITTAGAVPVPPMPKLNTNVASSMFFC</sequence>
<dbReference type="EMBL" id="AC069325">
    <property type="status" value="NOT_ANNOTATED_CDS"/>
    <property type="molecule type" value="Genomic_DNA"/>
</dbReference>
<dbReference type="EMBL" id="CP002688">
    <property type="protein sequence ID" value="AED92921.1"/>
    <property type="molecule type" value="Genomic_DNA"/>
</dbReference>
<dbReference type="RefSeq" id="NP_197602.2">
    <property type="nucleotide sequence ID" value="NM_122111.3"/>
</dbReference>
<dbReference type="SMR" id="Q3E984"/>
<dbReference type="STRING" id="3702.Q3E984"/>
<dbReference type="iPTMnet" id="Q3E984"/>
<dbReference type="PaxDb" id="3702-AT5G21030.1"/>
<dbReference type="EnsemblPlants" id="AT5G21030.1">
    <property type="protein sequence ID" value="AT5G21030.1"/>
    <property type="gene ID" value="AT5G21030"/>
</dbReference>
<dbReference type="GeneID" id="832227"/>
<dbReference type="Gramene" id="AT5G21030.1">
    <property type="protein sequence ID" value="AT5G21030.1"/>
    <property type="gene ID" value="AT5G21030"/>
</dbReference>
<dbReference type="KEGG" id="ath:AT5G21030"/>
<dbReference type="Araport" id="AT5G21030"/>
<dbReference type="TAIR" id="AT5G21030">
    <property type="gene designation" value="AGO8"/>
</dbReference>
<dbReference type="eggNOG" id="KOG1041">
    <property type="taxonomic scope" value="Eukaryota"/>
</dbReference>
<dbReference type="HOGENOM" id="CLU_004544_2_0_1"/>
<dbReference type="InParanoid" id="Q3E984"/>
<dbReference type="PhylomeDB" id="Q3E984"/>
<dbReference type="PRO" id="PR:Q3E984"/>
<dbReference type="Proteomes" id="UP000006548">
    <property type="component" value="Chromosome 5"/>
</dbReference>
<dbReference type="ExpressionAtlas" id="Q3E984">
    <property type="expression patterns" value="baseline and differential"/>
</dbReference>
<dbReference type="GO" id="GO:1990904">
    <property type="term" value="C:ribonucleoprotein complex"/>
    <property type="evidence" value="ECO:0007669"/>
    <property type="project" value="UniProtKB-KW"/>
</dbReference>
<dbReference type="GO" id="GO:0003723">
    <property type="term" value="F:RNA binding"/>
    <property type="evidence" value="ECO:0007669"/>
    <property type="project" value="UniProtKB-KW"/>
</dbReference>
<dbReference type="GO" id="GO:0051607">
    <property type="term" value="P:defense response to virus"/>
    <property type="evidence" value="ECO:0007669"/>
    <property type="project" value="UniProtKB-ARBA"/>
</dbReference>
<dbReference type="GO" id="GO:0006417">
    <property type="term" value="P:regulation of translation"/>
    <property type="evidence" value="ECO:0007669"/>
    <property type="project" value="UniProtKB-KW"/>
</dbReference>
<dbReference type="GO" id="GO:0031047">
    <property type="term" value="P:regulatory ncRNA-mediated gene silencing"/>
    <property type="evidence" value="ECO:0007669"/>
    <property type="project" value="UniProtKB-KW"/>
</dbReference>
<dbReference type="CDD" id="cd02846">
    <property type="entry name" value="PAZ_argonaute_like"/>
    <property type="match status" value="1"/>
</dbReference>
<dbReference type="CDD" id="cd04657">
    <property type="entry name" value="Piwi_ago-like"/>
    <property type="match status" value="1"/>
</dbReference>
<dbReference type="FunFam" id="3.30.420.10:FF:000091">
    <property type="entry name" value="Protein argonaute 3"/>
    <property type="match status" value="1"/>
</dbReference>
<dbReference type="FunFam" id="2.170.260.10:FF:000008">
    <property type="entry name" value="Protein argonaute 7"/>
    <property type="match status" value="1"/>
</dbReference>
<dbReference type="Gene3D" id="3.40.50.2300">
    <property type="match status" value="1"/>
</dbReference>
<dbReference type="Gene3D" id="2.170.260.10">
    <property type="entry name" value="paz domain"/>
    <property type="match status" value="1"/>
</dbReference>
<dbReference type="Gene3D" id="3.30.420.10">
    <property type="entry name" value="Ribonuclease H-like superfamily/Ribonuclease H"/>
    <property type="match status" value="2"/>
</dbReference>
<dbReference type="InterPro" id="IPR014811">
    <property type="entry name" value="ArgoL1"/>
</dbReference>
<dbReference type="InterPro" id="IPR032472">
    <property type="entry name" value="ArgoL2"/>
</dbReference>
<dbReference type="InterPro" id="IPR032474">
    <property type="entry name" value="Argonaute_N"/>
</dbReference>
<dbReference type="InterPro" id="IPR003100">
    <property type="entry name" value="PAZ_dom"/>
</dbReference>
<dbReference type="InterPro" id="IPR036085">
    <property type="entry name" value="PAZ_dom_sf"/>
</dbReference>
<dbReference type="InterPro" id="IPR003165">
    <property type="entry name" value="Piwi"/>
</dbReference>
<dbReference type="InterPro" id="IPR045246">
    <property type="entry name" value="Piwi_ago-like"/>
</dbReference>
<dbReference type="InterPro" id="IPR012337">
    <property type="entry name" value="RNaseH-like_sf"/>
</dbReference>
<dbReference type="InterPro" id="IPR036397">
    <property type="entry name" value="RNaseH_sf"/>
</dbReference>
<dbReference type="PANTHER" id="PTHR22891">
    <property type="entry name" value="EUKARYOTIC TRANSLATION INITIATION FACTOR 2C"/>
    <property type="match status" value="1"/>
</dbReference>
<dbReference type="Pfam" id="PF08699">
    <property type="entry name" value="ArgoL1"/>
    <property type="match status" value="1"/>
</dbReference>
<dbReference type="Pfam" id="PF16488">
    <property type="entry name" value="ArgoL2"/>
    <property type="match status" value="1"/>
</dbReference>
<dbReference type="Pfam" id="PF16486">
    <property type="entry name" value="ArgoN"/>
    <property type="match status" value="1"/>
</dbReference>
<dbReference type="Pfam" id="PF02170">
    <property type="entry name" value="PAZ"/>
    <property type="match status" value="1"/>
</dbReference>
<dbReference type="Pfam" id="PF02171">
    <property type="entry name" value="Piwi"/>
    <property type="match status" value="2"/>
</dbReference>
<dbReference type="SMART" id="SM01163">
    <property type="entry name" value="DUF1785"/>
    <property type="match status" value="1"/>
</dbReference>
<dbReference type="SMART" id="SM00950">
    <property type="entry name" value="Piwi"/>
    <property type="match status" value="1"/>
</dbReference>
<dbReference type="SUPFAM" id="SSF101690">
    <property type="entry name" value="PAZ domain"/>
    <property type="match status" value="1"/>
</dbReference>
<dbReference type="SUPFAM" id="SSF53098">
    <property type="entry name" value="Ribonuclease H-like"/>
    <property type="match status" value="1"/>
</dbReference>
<dbReference type="PROSITE" id="PS50821">
    <property type="entry name" value="PAZ"/>
    <property type="match status" value="1"/>
</dbReference>
<dbReference type="PROSITE" id="PS50822">
    <property type="entry name" value="PIWI"/>
    <property type="match status" value="1"/>
</dbReference>
<name>AGO8_ARATH</name>
<gene>
    <name type="primary">AGO8</name>
    <name type="ordered locus">At5g21030</name>
    <name type="ORF">T10F18.3</name>
</gene>
<organism>
    <name type="scientific">Arabidopsis thaliana</name>
    <name type="common">Mouse-ear cress</name>
    <dbReference type="NCBI Taxonomy" id="3702"/>
    <lineage>
        <taxon>Eukaryota</taxon>
        <taxon>Viridiplantae</taxon>
        <taxon>Streptophyta</taxon>
        <taxon>Embryophyta</taxon>
        <taxon>Tracheophyta</taxon>
        <taxon>Spermatophyta</taxon>
        <taxon>Magnoliopsida</taxon>
        <taxon>eudicotyledons</taxon>
        <taxon>Gunneridae</taxon>
        <taxon>Pentapetalae</taxon>
        <taxon>rosids</taxon>
        <taxon>malvids</taxon>
        <taxon>Brassicales</taxon>
        <taxon>Brassicaceae</taxon>
        <taxon>Camelineae</taxon>
        <taxon>Arabidopsis</taxon>
    </lineage>
</organism>
<proteinExistence type="inferred from homology"/>
<evidence type="ECO:0000250" key="1"/>
<evidence type="ECO:0000255" key="2">
    <source>
        <dbReference type="PROSITE-ProRule" id="PRU00142"/>
    </source>
</evidence>
<evidence type="ECO:0000255" key="3">
    <source>
        <dbReference type="PROSITE-ProRule" id="PRU00150"/>
    </source>
</evidence>
<evidence type="ECO:0000256" key="4">
    <source>
        <dbReference type="SAM" id="MobiDB-lite"/>
    </source>
</evidence>
<evidence type="ECO:0000305" key="5"/>
<feature type="chain" id="PRO_0000404670" description="Protein argonaute 8">
    <location>
        <begin position="1"/>
        <end position="850"/>
    </location>
</feature>
<feature type="domain" description="PAZ" evidence="2">
    <location>
        <begin position="247"/>
        <end position="361"/>
    </location>
</feature>
<feature type="domain" description="Piwi" evidence="3">
    <location>
        <begin position="518"/>
        <end position="811"/>
    </location>
</feature>
<feature type="region of interest" description="Disordered" evidence="4">
    <location>
        <begin position="1"/>
        <end position="30"/>
    </location>
</feature>
<keyword id="KW-1185">Reference proteome</keyword>
<keyword id="KW-0678">Repressor</keyword>
<keyword id="KW-0687">Ribonucleoprotein</keyword>
<keyword id="KW-0694">RNA-binding</keyword>
<keyword id="KW-0943">RNA-mediated gene silencing</keyword>
<keyword id="KW-0804">Transcription</keyword>
<keyword id="KW-0805">Transcription regulation</keyword>
<keyword id="KW-0810">Translation regulation</keyword>
<reference key="1">
    <citation type="journal article" date="2000" name="Nature">
        <title>Sequence and analysis of chromosome 5 of the plant Arabidopsis thaliana.</title>
        <authorList>
            <person name="Tabata S."/>
            <person name="Kaneko T."/>
            <person name="Nakamura Y."/>
            <person name="Kotani H."/>
            <person name="Kato T."/>
            <person name="Asamizu E."/>
            <person name="Miyajima N."/>
            <person name="Sasamoto S."/>
            <person name="Kimura T."/>
            <person name="Hosouchi T."/>
            <person name="Kawashima K."/>
            <person name="Kohara M."/>
            <person name="Matsumoto M."/>
            <person name="Matsuno A."/>
            <person name="Muraki A."/>
            <person name="Nakayama S."/>
            <person name="Nakazaki N."/>
            <person name="Naruo K."/>
            <person name="Okumura S."/>
            <person name="Shinpo S."/>
            <person name="Takeuchi C."/>
            <person name="Wada T."/>
            <person name="Watanabe A."/>
            <person name="Yamada M."/>
            <person name="Yasuda M."/>
            <person name="Sato S."/>
            <person name="de la Bastide M."/>
            <person name="Huang E."/>
            <person name="Spiegel L."/>
            <person name="Gnoj L."/>
            <person name="O'Shaughnessy A."/>
            <person name="Preston R."/>
            <person name="Habermann K."/>
            <person name="Murray J."/>
            <person name="Johnson D."/>
            <person name="Rohlfing T."/>
            <person name="Nelson J."/>
            <person name="Stoneking T."/>
            <person name="Pepin K."/>
            <person name="Spieth J."/>
            <person name="Sekhon M."/>
            <person name="Armstrong J."/>
            <person name="Becker M."/>
            <person name="Belter E."/>
            <person name="Cordum H."/>
            <person name="Cordes M."/>
            <person name="Courtney L."/>
            <person name="Courtney W."/>
            <person name="Dante M."/>
            <person name="Du H."/>
            <person name="Edwards J."/>
            <person name="Fryman J."/>
            <person name="Haakensen B."/>
            <person name="Lamar E."/>
            <person name="Latreille P."/>
            <person name="Leonard S."/>
            <person name="Meyer R."/>
            <person name="Mulvaney E."/>
            <person name="Ozersky P."/>
            <person name="Riley A."/>
            <person name="Strowmatt C."/>
            <person name="Wagner-McPherson C."/>
            <person name="Wollam A."/>
            <person name="Yoakum M."/>
            <person name="Bell M."/>
            <person name="Dedhia N."/>
            <person name="Parnell L."/>
            <person name="Shah R."/>
            <person name="Rodriguez M."/>
            <person name="Hoon See L."/>
            <person name="Vil D."/>
            <person name="Baker J."/>
            <person name="Kirchoff K."/>
            <person name="Toth K."/>
            <person name="King L."/>
            <person name="Bahret A."/>
            <person name="Miller B."/>
            <person name="Marra M.A."/>
            <person name="Martienssen R."/>
            <person name="McCombie W.R."/>
            <person name="Wilson R.K."/>
            <person name="Murphy G."/>
            <person name="Bancroft I."/>
            <person name="Volckaert G."/>
            <person name="Wambutt R."/>
            <person name="Duesterhoeft A."/>
            <person name="Stiekema W."/>
            <person name="Pohl T."/>
            <person name="Entian K.-D."/>
            <person name="Terryn N."/>
            <person name="Hartley N."/>
            <person name="Bent E."/>
            <person name="Johnson S."/>
            <person name="Langham S.-A."/>
            <person name="McCullagh B."/>
            <person name="Robben J."/>
            <person name="Grymonprez B."/>
            <person name="Zimmermann W."/>
            <person name="Ramsperger U."/>
            <person name="Wedler H."/>
            <person name="Balke K."/>
            <person name="Wedler E."/>
            <person name="Peters S."/>
            <person name="van Staveren M."/>
            <person name="Dirkse W."/>
            <person name="Mooijman P."/>
            <person name="Klein Lankhorst R."/>
            <person name="Weitzenegger T."/>
            <person name="Bothe G."/>
            <person name="Rose M."/>
            <person name="Hauf J."/>
            <person name="Berneiser S."/>
            <person name="Hempel S."/>
            <person name="Feldpausch M."/>
            <person name="Lamberth S."/>
            <person name="Villarroel R."/>
            <person name="Gielen J."/>
            <person name="Ardiles W."/>
            <person name="Bents O."/>
            <person name="Lemcke K."/>
            <person name="Kolesov G."/>
            <person name="Mayer K.F.X."/>
            <person name="Rudd S."/>
            <person name="Schoof H."/>
            <person name="Schueller C."/>
            <person name="Zaccaria P."/>
            <person name="Mewes H.-W."/>
            <person name="Bevan M."/>
            <person name="Fransz P.F."/>
        </authorList>
    </citation>
    <scope>NUCLEOTIDE SEQUENCE [LARGE SCALE GENOMIC DNA]</scope>
    <source>
        <strain>cv. Columbia</strain>
    </source>
</reference>
<reference key="2">
    <citation type="journal article" date="2017" name="Plant J.">
        <title>Araport11: a complete reannotation of the Arabidopsis thaliana reference genome.</title>
        <authorList>
            <person name="Cheng C.Y."/>
            <person name="Krishnakumar V."/>
            <person name="Chan A.P."/>
            <person name="Thibaud-Nissen F."/>
            <person name="Schobel S."/>
            <person name="Town C.D."/>
        </authorList>
    </citation>
    <scope>GENOME REANNOTATION</scope>
    <source>
        <strain>cv. Columbia</strain>
    </source>
</reference>